<protein>
    <recommendedName>
        <fullName evidence="1">tRNA N6-adenosine threonylcarbamoyltransferase</fullName>
        <ecNumber evidence="1">2.3.1.234</ecNumber>
    </recommendedName>
    <alternativeName>
        <fullName evidence="1">N6-L-threonylcarbamoyladenine synthase</fullName>
        <shortName evidence="1">t(6)A synthase</shortName>
    </alternativeName>
    <alternativeName>
        <fullName evidence="1">t(6)A37 threonylcarbamoyladenosine biosynthesis protein TsaD</fullName>
    </alternativeName>
    <alternativeName>
        <fullName evidence="1">tRNA threonylcarbamoyladenosine biosynthesis protein TsaD</fullName>
    </alternativeName>
</protein>
<comment type="function">
    <text evidence="1">Required for the formation of a threonylcarbamoyl group on adenosine at position 37 (t(6)A37) in tRNAs that read codons beginning with adenine. Is involved in the transfer of the threonylcarbamoyl moiety of threonylcarbamoyl-AMP (TC-AMP) to the N6 group of A37, together with TsaE and TsaB. TsaD likely plays a direct catalytic role in this reaction.</text>
</comment>
<comment type="catalytic activity">
    <reaction evidence="1">
        <text>L-threonylcarbamoyladenylate + adenosine(37) in tRNA = N(6)-L-threonylcarbamoyladenosine(37) in tRNA + AMP + H(+)</text>
        <dbReference type="Rhea" id="RHEA:37059"/>
        <dbReference type="Rhea" id="RHEA-COMP:10162"/>
        <dbReference type="Rhea" id="RHEA-COMP:10163"/>
        <dbReference type="ChEBI" id="CHEBI:15378"/>
        <dbReference type="ChEBI" id="CHEBI:73682"/>
        <dbReference type="ChEBI" id="CHEBI:74411"/>
        <dbReference type="ChEBI" id="CHEBI:74418"/>
        <dbReference type="ChEBI" id="CHEBI:456215"/>
        <dbReference type="EC" id="2.3.1.234"/>
    </reaction>
</comment>
<comment type="cofactor">
    <cofactor evidence="1">
        <name>Fe(2+)</name>
        <dbReference type="ChEBI" id="CHEBI:29033"/>
    </cofactor>
    <text evidence="1">Binds 1 Fe(2+) ion per subunit.</text>
</comment>
<comment type="subcellular location">
    <subcellularLocation>
        <location evidence="1">Cytoplasm</location>
    </subcellularLocation>
</comment>
<comment type="similarity">
    <text evidence="1">Belongs to the KAE1 / TsaD family.</text>
</comment>
<organism>
    <name type="scientific">Geobacter sp. (strain M21)</name>
    <dbReference type="NCBI Taxonomy" id="443144"/>
    <lineage>
        <taxon>Bacteria</taxon>
        <taxon>Pseudomonadati</taxon>
        <taxon>Thermodesulfobacteriota</taxon>
        <taxon>Desulfuromonadia</taxon>
        <taxon>Geobacterales</taxon>
        <taxon>Geobacteraceae</taxon>
        <taxon>Geobacter</taxon>
    </lineage>
</organism>
<keyword id="KW-0012">Acyltransferase</keyword>
<keyword id="KW-0963">Cytoplasm</keyword>
<keyword id="KW-0408">Iron</keyword>
<keyword id="KW-0479">Metal-binding</keyword>
<keyword id="KW-0808">Transferase</keyword>
<keyword id="KW-0819">tRNA processing</keyword>
<name>TSAD_GEOSM</name>
<evidence type="ECO:0000255" key="1">
    <source>
        <dbReference type="HAMAP-Rule" id="MF_01445"/>
    </source>
</evidence>
<accession>C6E7C1</accession>
<gene>
    <name evidence="1" type="primary">tsaD</name>
    <name type="synonym">gcp</name>
    <name type="ordered locus">GM21_1934</name>
</gene>
<dbReference type="EC" id="2.3.1.234" evidence="1"/>
<dbReference type="EMBL" id="CP001661">
    <property type="protein sequence ID" value="ACT17987.1"/>
    <property type="molecule type" value="Genomic_DNA"/>
</dbReference>
<dbReference type="SMR" id="C6E7C1"/>
<dbReference type="STRING" id="443144.GM21_1934"/>
<dbReference type="KEGG" id="gem:GM21_1934"/>
<dbReference type="eggNOG" id="COG0533">
    <property type="taxonomic scope" value="Bacteria"/>
</dbReference>
<dbReference type="HOGENOM" id="CLU_023208_0_2_7"/>
<dbReference type="OrthoDB" id="9806197at2"/>
<dbReference type="GO" id="GO:0005737">
    <property type="term" value="C:cytoplasm"/>
    <property type="evidence" value="ECO:0007669"/>
    <property type="project" value="UniProtKB-SubCell"/>
</dbReference>
<dbReference type="GO" id="GO:0005506">
    <property type="term" value="F:iron ion binding"/>
    <property type="evidence" value="ECO:0007669"/>
    <property type="project" value="UniProtKB-UniRule"/>
</dbReference>
<dbReference type="GO" id="GO:0061711">
    <property type="term" value="F:N(6)-L-threonylcarbamoyladenine synthase activity"/>
    <property type="evidence" value="ECO:0007669"/>
    <property type="project" value="UniProtKB-EC"/>
</dbReference>
<dbReference type="GO" id="GO:0002949">
    <property type="term" value="P:tRNA threonylcarbamoyladenosine modification"/>
    <property type="evidence" value="ECO:0007669"/>
    <property type="project" value="UniProtKB-UniRule"/>
</dbReference>
<dbReference type="CDD" id="cd24133">
    <property type="entry name" value="ASKHA_NBD_TsaD_bac"/>
    <property type="match status" value="1"/>
</dbReference>
<dbReference type="FunFam" id="3.30.420.40:FF:000012">
    <property type="entry name" value="tRNA N6-adenosine threonylcarbamoyltransferase"/>
    <property type="match status" value="1"/>
</dbReference>
<dbReference type="FunFam" id="3.30.420.40:FF:000040">
    <property type="entry name" value="tRNA N6-adenosine threonylcarbamoyltransferase"/>
    <property type="match status" value="1"/>
</dbReference>
<dbReference type="Gene3D" id="3.30.420.40">
    <property type="match status" value="2"/>
</dbReference>
<dbReference type="HAMAP" id="MF_01445">
    <property type="entry name" value="TsaD"/>
    <property type="match status" value="1"/>
</dbReference>
<dbReference type="InterPro" id="IPR043129">
    <property type="entry name" value="ATPase_NBD"/>
</dbReference>
<dbReference type="InterPro" id="IPR000905">
    <property type="entry name" value="Gcp-like_dom"/>
</dbReference>
<dbReference type="InterPro" id="IPR017861">
    <property type="entry name" value="KAE1/TsaD"/>
</dbReference>
<dbReference type="InterPro" id="IPR022450">
    <property type="entry name" value="TsaD"/>
</dbReference>
<dbReference type="NCBIfam" id="TIGR00329">
    <property type="entry name" value="gcp_kae1"/>
    <property type="match status" value="1"/>
</dbReference>
<dbReference type="NCBIfam" id="TIGR03723">
    <property type="entry name" value="T6A_TsaD_YgjD"/>
    <property type="match status" value="1"/>
</dbReference>
<dbReference type="PANTHER" id="PTHR11735">
    <property type="entry name" value="TRNA N6-ADENOSINE THREONYLCARBAMOYLTRANSFERASE"/>
    <property type="match status" value="1"/>
</dbReference>
<dbReference type="PANTHER" id="PTHR11735:SF6">
    <property type="entry name" value="TRNA N6-ADENOSINE THREONYLCARBAMOYLTRANSFERASE, MITOCHONDRIAL"/>
    <property type="match status" value="1"/>
</dbReference>
<dbReference type="Pfam" id="PF00814">
    <property type="entry name" value="TsaD"/>
    <property type="match status" value="1"/>
</dbReference>
<dbReference type="PRINTS" id="PR00789">
    <property type="entry name" value="OSIALOPTASE"/>
</dbReference>
<dbReference type="SUPFAM" id="SSF53067">
    <property type="entry name" value="Actin-like ATPase domain"/>
    <property type="match status" value="2"/>
</dbReference>
<sequence>MLVLALESSCDETAAAVVKDGRTVLSSIVASQISVHAEYGGVVPEIASRKHLESVSFVVEQALAEAGVGLDRIDGIAVTQGPGLAGALLVGISVAKGLAFGRSLPLVGVNHIEGHLLAVFLEAPVQFPFIALAVSGGHSHLYRVDGIGRYQTLGQTVDDAAGEAFDKVAKLIGLPYPGGVAIDRLAVSGDPKAIKFPRPLLHDGTFNFSFSGLKTAVLTHVGKHPEAKEAGINDLAASFQAAVCEVLTKKTAAAVAATGIKRLVVAGGVACNSALRRSMAEYAAANGVELSIPSPALCADNAAMIAVPGDYYLGLGVTSGFDLDALPVWPLDKLALRLKEHC</sequence>
<proteinExistence type="inferred from homology"/>
<feature type="chain" id="PRO_1000215301" description="tRNA N6-adenosine threonylcarbamoyltransferase">
    <location>
        <begin position="1"/>
        <end position="342"/>
    </location>
</feature>
<feature type="binding site" evidence="1">
    <location>
        <position position="111"/>
    </location>
    <ligand>
        <name>Fe cation</name>
        <dbReference type="ChEBI" id="CHEBI:24875"/>
    </ligand>
</feature>
<feature type="binding site" evidence="1">
    <location>
        <position position="115"/>
    </location>
    <ligand>
        <name>Fe cation</name>
        <dbReference type="ChEBI" id="CHEBI:24875"/>
    </ligand>
</feature>
<feature type="binding site" evidence="1">
    <location>
        <begin position="133"/>
        <end position="137"/>
    </location>
    <ligand>
        <name>substrate</name>
    </ligand>
</feature>
<feature type="binding site" evidence="1">
    <location>
        <position position="166"/>
    </location>
    <ligand>
        <name>substrate</name>
    </ligand>
</feature>
<feature type="binding site" evidence="1">
    <location>
        <position position="179"/>
    </location>
    <ligand>
        <name>substrate</name>
    </ligand>
</feature>
<feature type="binding site" evidence="1">
    <location>
        <position position="183"/>
    </location>
    <ligand>
        <name>substrate</name>
    </ligand>
</feature>
<feature type="binding site" evidence="1">
    <location>
        <position position="272"/>
    </location>
    <ligand>
        <name>substrate</name>
    </ligand>
</feature>
<feature type="binding site" evidence="1">
    <location>
        <position position="300"/>
    </location>
    <ligand>
        <name>Fe cation</name>
        <dbReference type="ChEBI" id="CHEBI:24875"/>
    </ligand>
</feature>
<reference key="1">
    <citation type="submission" date="2009-07" db="EMBL/GenBank/DDBJ databases">
        <title>Complete sequence of Geobacter sp. M21.</title>
        <authorList>
            <consortium name="US DOE Joint Genome Institute"/>
            <person name="Lucas S."/>
            <person name="Copeland A."/>
            <person name="Lapidus A."/>
            <person name="Glavina del Rio T."/>
            <person name="Dalin E."/>
            <person name="Tice H."/>
            <person name="Bruce D."/>
            <person name="Goodwin L."/>
            <person name="Pitluck S."/>
            <person name="Saunders E."/>
            <person name="Brettin T."/>
            <person name="Detter J.C."/>
            <person name="Han C."/>
            <person name="Larimer F."/>
            <person name="Land M."/>
            <person name="Hauser L."/>
            <person name="Kyrpides N."/>
            <person name="Ovchinnikova G."/>
            <person name="Lovley D."/>
        </authorList>
    </citation>
    <scope>NUCLEOTIDE SEQUENCE [LARGE SCALE GENOMIC DNA]</scope>
    <source>
        <strain>M21</strain>
    </source>
</reference>